<geneLocation type="chloroplast"/>
<comment type="function">
    <text evidence="1">One of the components of the core complex of photosystem II (PSII). It binds chlorophyll and helps catalyze the primary light-induced photochemical processes of PSII. PSII is a light-driven water:plastoquinone oxidoreductase, using light energy to abstract electrons from H(2)O, generating O(2) and a proton gradient subsequently used for ATP formation.</text>
</comment>
<comment type="cofactor">
    <text evidence="1">Binds multiple chlorophylls and provides some of the ligands for the Ca-4Mn-5O cluster of the oxygen-evolving complex. It may also provide a ligand for a Cl- that is required for oxygen evolution. PSII binds additional chlorophylls, carotenoids and specific lipids.</text>
</comment>
<comment type="subunit">
    <text evidence="1">PSII is composed of 1 copy each of membrane proteins PsbA, PsbB, PsbC, PsbD, PsbE, PsbF, PsbH, PsbI, PsbJ, PsbK, PsbL, PsbM, PsbT, PsbX, PsbY, PsbZ, Psb30/Ycf12, at least 3 peripheral proteins of the oxygen-evolving complex and a large number of cofactors. It forms dimeric complexes.</text>
</comment>
<comment type="subcellular location">
    <subcellularLocation>
        <location evidence="1">Plastid</location>
        <location evidence="1">Chloroplast thylakoid membrane</location>
        <topology evidence="1">Multi-pass membrane protein</topology>
    </subcellularLocation>
</comment>
<comment type="similarity">
    <text evidence="1">Belongs to the PsbB/PsbC family. PsbC subfamily.</text>
</comment>
<comment type="sequence caution" evidence="2">
    <conflict type="erroneous initiation">
        <sequence resource="EMBL-CDS" id="CAI53790"/>
    </conflict>
    <text>Extended N-terminus.</text>
</comment>
<accession>Q3V538</accession>
<proteinExistence type="inferred from homology"/>
<evidence type="ECO:0000255" key="1">
    <source>
        <dbReference type="HAMAP-Rule" id="MF_01496"/>
    </source>
</evidence>
<evidence type="ECO:0000305" key="2"/>
<reference key="1">
    <citation type="journal article" date="2005" name="Mol. Biol. Evol.">
        <title>Analysis of Acorus calamus chloroplast genome and its phylogenetic implications.</title>
        <authorList>
            <person name="Goremykin V.V."/>
            <person name="Holland B."/>
            <person name="Hirsch-Ernst K.I."/>
            <person name="Hellwig F.H."/>
        </authorList>
    </citation>
    <scope>NUCLEOTIDE SEQUENCE [LARGE SCALE GENOMIC DNA]</scope>
</reference>
<dbReference type="EMBL" id="AJ879453">
    <property type="protein sequence ID" value="CAI53790.1"/>
    <property type="status" value="ALT_INIT"/>
    <property type="molecule type" value="Genomic_DNA"/>
</dbReference>
<dbReference type="RefSeq" id="YP_319761.1">
    <property type="nucleotide sequence ID" value="NC_007407.1"/>
</dbReference>
<dbReference type="SMR" id="Q3V538"/>
<dbReference type="GeneID" id="3677464"/>
<dbReference type="GO" id="GO:0009535">
    <property type="term" value="C:chloroplast thylakoid membrane"/>
    <property type="evidence" value="ECO:0007669"/>
    <property type="project" value="UniProtKB-SubCell"/>
</dbReference>
<dbReference type="GO" id="GO:0009523">
    <property type="term" value="C:photosystem II"/>
    <property type="evidence" value="ECO:0007669"/>
    <property type="project" value="UniProtKB-KW"/>
</dbReference>
<dbReference type="GO" id="GO:0016168">
    <property type="term" value="F:chlorophyll binding"/>
    <property type="evidence" value="ECO:0007669"/>
    <property type="project" value="UniProtKB-UniRule"/>
</dbReference>
<dbReference type="GO" id="GO:0045156">
    <property type="term" value="F:electron transporter, transferring electrons within the cyclic electron transport pathway of photosynthesis activity"/>
    <property type="evidence" value="ECO:0007669"/>
    <property type="project" value="InterPro"/>
</dbReference>
<dbReference type="GO" id="GO:0046872">
    <property type="term" value="F:metal ion binding"/>
    <property type="evidence" value="ECO:0007669"/>
    <property type="project" value="UniProtKB-KW"/>
</dbReference>
<dbReference type="GO" id="GO:0009772">
    <property type="term" value="P:photosynthetic electron transport in photosystem II"/>
    <property type="evidence" value="ECO:0007669"/>
    <property type="project" value="InterPro"/>
</dbReference>
<dbReference type="FunFam" id="1.10.10.670:FF:000001">
    <property type="entry name" value="Photosystem II CP43 reaction center protein"/>
    <property type="match status" value="1"/>
</dbReference>
<dbReference type="Gene3D" id="1.10.10.670">
    <property type="entry name" value="photosystem ii from thermosynechococcus elongatus"/>
    <property type="match status" value="1"/>
</dbReference>
<dbReference type="HAMAP" id="MF_01496">
    <property type="entry name" value="PSII_PsbC_CP43"/>
    <property type="match status" value="1"/>
</dbReference>
<dbReference type="InterPro" id="IPR000932">
    <property type="entry name" value="PS_antenna-like"/>
</dbReference>
<dbReference type="InterPro" id="IPR036001">
    <property type="entry name" value="PS_II_antenna-like_sf"/>
</dbReference>
<dbReference type="InterPro" id="IPR005869">
    <property type="entry name" value="PSII_PsbC"/>
</dbReference>
<dbReference type="InterPro" id="IPR044900">
    <property type="entry name" value="PSII_PsbC_sf"/>
</dbReference>
<dbReference type="NCBIfam" id="TIGR01153">
    <property type="entry name" value="psbC"/>
    <property type="match status" value="1"/>
</dbReference>
<dbReference type="Pfam" id="PF00421">
    <property type="entry name" value="PSII"/>
    <property type="match status" value="1"/>
</dbReference>
<dbReference type="SUPFAM" id="SSF161077">
    <property type="entry name" value="Photosystem II antenna protein-like"/>
    <property type="match status" value="1"/>
</dbReference>
<sequence length="473" mass="51840">MKTLYSLRRFYPVETLFNGTLALAGRDQETTGFAWWAGNARLINLSGKLLGAHVAHAGLIVFWAGAMNLFEVAHFVPEKPMYEQGLILLPHLATLGWGVGPGGEVIDTFPYFVSGVLHLISSAVLGFGGIYHALLGPETLEESFPFFGYVWKDRNKMTTILGIHLILLGIGAFLLVFKALYFGGVYDTWAPGGGDVRKITNLTLSPSVIFGYLLKSPFGGEGWIVSVDDLEDIIGGHVWLGSICILGGIWHILTKPFAWARRAFVWSGEAYLSYSLGALAVFGFIACCFVWFNNTAYPSEFYGPTGPEASQAQAFTFLVRDQRLGANVGSAQGPTGLGKYLMRSPTGEVIFGGETMRFWDLRAPWLEPLRGPNGLDLSRLKKDIQPWQERRSAEYMTHAPLGSLNSVGGVATEINAVNYVSPRSWLATSHFVLGFFFFVGHLWHAGRARAAAAGFEKGIDRDLEPVLSMTPLN</sequence>
<protein>
    <recommendedName>
        <fullName evidence="1">Photosystem II CP43 reaction center protein</fullName>
    </recommendedName>
    <alternativeName>
        <fullName evidence="1">PSII 43 kDa protein</fullName>
    </alternativeName>
    <alternativeName>
        <fullName evidence="1">Protein CP-43</fullName>
    </alternativeName>
</protein>
<keyword id="KW-0007">Acetylation</keyword>
<keyword id="KW-0148">Chlorophyll</keyword>
<keyword id="KW-0150">Chloroplast</keyword>
<keyword id="KW-0157">Chromophore</keyword>
<keyword id="KW-0464">Manganese</keyword>
<keyword id="KW-0472">Membrane</keyword>
<keyword id="KW-0479">Metal-binding</keyword>
<keyword id="KW-0597">Phosphoprotein</keyword>
<keyword id="KW-0602">Photosynthesis</keyword>
<keyword id="KW-0604">Photosystem II</keyword>
<keyword id="KW-0934">Plastid</keyword>
<keyword id="KW-0793">Thylakoid</keyword>
<keyword id="KW-0812">Transmembrane</keyword>
<keyword id="KW-1133">Transmembrane helix</keyword>
<feature type="propeptide" id="PRO_0000431104" evidence="1">
    <location>
        <begin position="1"/>
        <end position="14"/>
    </location>
</feature>
<feature type="chain" id="PRO_0000361307" description="Photosystem II CP43 reaction center protein" evidence="1">
    <location>
        <begin position="15"/>
        <end position="473"/>
    </location>
</feature>
<feature type="transmembrane region" description="Helical" evidence="1">
    <location>
        <begin position="69"/>
        <end position="93"/>
    </location>
</feature>
<feature type="transmembrane region" description="Helical" evidence="1">
    <location>
        <begin position="134"/>
        <end position="155"/>
    </location>
</feature>
<feature type="transmembrane region" description="Helical" evidence="1">
    <location>
        <begin position="178"/>
        <end position="200"/>
    </location>
</feature>
<feature type="transmembrane region" description="Helical" evidence="1">
    <location>
        <begin position="255"/>
        <end position="275"/>
    </location>
</feature>
<feature type="transmembrane region" description="Helical" evidence="1">
    <location>
        <begin position="291"/>
        <end position="312"/>
    </location>
</feature>
<feature type="transmembrane region" description="Helical" evidence="1">
    <location>
        <begin position="447"/>
        <end position="471"/>
    </location>
</feature>
<feature type="binding site" evidence="1">
    <location>
        <position position="367"/>
    </location>
    <ligand>
        <name>[CaMn4O5] cluster</name>
        <dbReference type="ChEBI" id="CHEBI:189552"/>
    </ligand>
</feature>
<feature type="modified residue" description="N-acetylthreonine" evidence="1">
    <location>
        <position position="15"/>
    </location>
</feature>
<feature type="modified residue" description="Phosphothreonine" evidence="1">
    <location>
        <position position="15"/>
    </location>
</feature>
<gene>
    <name evidence="1" type="primary">psbC</name>
</gene>
<organism>
    <name type="scientific">Acorus calamus</name>
    <name type="common">Sweet flag</name>
    <dbReference type="NCBI Taxonomy" id="4465"/>
    <lineage>
        <taxon>Eukaryota</taxon>
        <taxon>Viridiplantae</taxon>
        <taxon>Streptophyta</taxon>
        <taxon>Embryophyta</taxon>
        <taxon>Tracheophyta</taxon>
        <taxon>Spermatophyta</taxon>
        <taxon>Magnoliopsida</taxon>
        <taxon>Liliopsida</taxon>
        <taxon>Acoraceae</taxon>
        <taxon>Acorus</taxon>
    </lineage>
</organism>
<name>PSBC_ACOCL</name>